<gene>
    <name evidence="1" type="primary">rpsG</name>
    <name type="ordered locus">DSY0467</name>
</gene>
<proteinExistence type="inferred from homology"/>
<sequence length="156" mass="17871">MPRKGYIAKREILPDPIYKNRVLTKFINQIMLDGKKGTAESICYNAFELIQEKTGKDPIEVFETALKNVMPVLEVKARRVGGANYQVPIEVRADRRQTLGLRWLVGYARKRSEKTMEERIAGELMDAANNTGGSIKKKEDTHKMAEANKAFAHYRW</sequence>
<accession>Q250N6</accession>
<evidence type="ECO:0000255" key="1">
    <source>
        <dbReference type="HAMAP-Rule" id="MF_00480"/>
    </source>
</evidence>
<evidence type="ECO:0000305" key="2"/>
<dbReference type="EMBL" id="AP008230">
    <property type="protein sequence ID" value="BAE82256.1"/>
    <property type="molecule type" value="Genomic_DNA"/>
</dbReference>
<dbReference type="RefSeq" id="WP_005810168.1">
    <property type="nucleotide sequence ID" value="NC_007907.1"/>
</dbReference>
<dbReference type="SMR" id="Q250N6"/>
<dbReference type="STRING" id="138119.DSY0467"/>
<dbReference type="KEGG" id="dsy:DSY0467"/>
<dbReference type="eggNOG" id="COG0049">
    <property type="taxonomic scope" value="Bacteria"/>
</dbReference>
<dbReference type="HOGENOM" id="CLU_072226_1_1_9"/>
<dbReference type="Proteomes" id="UP000001946">
    <property type="component" value="Chromosome"/>
</dbReference>
<dbReference type="GO" id="GO:0015935">
    <property type="term" value="C:small ribosomal subunit"/>
    <property type="evidence" value="ECO:0007669"/>
    <property type="project" value="InterPro"/>
</dbReference>
<dbReference type="GO" id="GO:0019843">
    <property type="term" value="F:rRNA binding"/>
    <property type="evidence" value="ECO:0007669"/>
    <property type="project" value="UniProtKB-UniRule"/>
</dbReference>
<dbReference type="GO" id="GO:0003735">
    <property type="term" value="F:structural constituent of ribosome"/>
    <property type="evidence" value="ECO:0007669"/>
    <property type="project" value="InterPro"/>
</dbReference>
<dbReference type="GO" id="GO:0000049">
    <property type="term" value="F:tRNA binding"/>
    <property type="evidence" value="ECO:0007669"/>
    <property type="project" value="UniProtKB-UniRule"/>
</dbReference>
<dbReference type="GO" id="GO:0006412">
    <property type="term" value="P:translation"/>
    <property type="evidence" value="ECO:0007669"/>
    <property type="project" value="UniProtKB-UniRule"/>
</dbReference>
<dbReference type="CDD" id="cd14869">
    <property type="entry name" value="uS7_Bacteria"/>
    <property type="match status" value="1"/>
</dbReference>
<dbReference type="FunFam" id="1.10.455.10:FF:000001">
    <property type="entry name" value="30S ribosomal protein S7"/>
    <property type="match status" value="1"/>
</dbReference>
<dbReference type="Gene3D" id="1.10.455.10">
    <property type="entry name" value="Ribosomal protein S7 domain"/>
    <property type="match status" value="1"/>
</dbReference>
<dbReference type="HAMAP" id="MF_00480_B">
    <property type="entry name" value="Ribosomal_uS7_B"/>
    <property type="match status" value="1"/>
</dbReference>
<dbReference type="InterPro" id="IPR000235">
    <property type="entry name" value="Ribosomal_uS7"/>
</dbReference>
<dbReference type="InterPro" id="IPR005717">
    <property type="entry name" value="Ribosomal_uS7_bac/org-type"/>
</dbReference>
<dbReference type="InterPro" id="IPR020606">
    <property type="entry name" value="Ribosomal_uS7_CS"/>
</dbReference>
<dbReference type="InterPro" id="IPR023798">
    <property type="entry name" value="Ribosomal_uS7_dom"/>
</dbReference>
<dbReference type="InterPro" id="IPR036823">
    <property type="entry name" value="Ribosomal_uS7_dom_sf"/>
</dbReference>
<dbReference type="NCBIfam" id="TIGR01029">
    <property type="entry name" value="rpsG_bact"/>
    <property type="match status" value="1"/>
</dbReference>
<dbReference type="PANTHER" id="PTHR11205">
    <property type="entry name" value="RIBOSOMAL PROTEIN S7"/>
    <property type="match status" value="1"/>
</dbReference>
<dbReference type="Pfam" id="PF00177">
    <property type="entry name" value="Ribosomal_S7"/>
    <property type="match status" value="1"/>
</dbReference>
<dbReference type="PIRSF" id="PIRSF002122">
    <property type="entry name" value="RPS7p_RPS7a_RPS5e_RPS7o"/>
    <property type="match status" value="1"/>
</dbReference>
<dbReference type="SUPFAM" id="SSF47973">
    <property type="entry name" value="Ribosomal protein S7"/>
    <property type="match status" value="1"/>
</dbReference>
<dbReference type="PROSITE" id="PS00052">
    <property type="entry name" value="RIBOSOMAL_S7"/>
    <property type="match status" value="1"/>
</dbReference>
<reference key="1">
    <citation type="journal article" date="2006" name="J. Bacteriol.">
        <title>Complete genome sequence of the dehalorespiring bacterium Desulfitobacterium hafniense Y51 and comparison with Dehalococcoides ethenogenes 195.</title>
        <authorList>
            <person name="Nonaka H."/>
            <person name="Keresztes G."/>
            <person name="Shinoda Y."/>
            <person name="Ikenaga Y."/>
            <person name="Abe M."/>
            <person name="Naito K."/>
            <person name="Inatomi K."/>
            <person name="Furukawa K."/>
            <person name="Inui M."/>
            <person name="Yukawa H."/>
        </authorList>
    </citation>
    <scope>NUCLEOTIDE SEQUENCE [LARGE SCALE GENOMIC DNA]</scope>
    <source>
        <strain>Y51</strain>
    </source>
</reference>
<name>RS7_DESHY</name>
<protein>
    <recommendedName>
        <fullName evidence="1">Small ribosomal subunit protein uS7</fullName>
    </recommendedName>
    <alternativeName>
        <fullName evidence="2">30S ribosomal protein S7</fullName>
    </alternativeName>
</protein>
<organism>
    <name type="scientific">Desulfitobacterium hafniense (strain Y51)</name>
    <dbReference type="NCBI Taxonomy" id="138119"/>
    <lineage>
        <taxon>Bacteria</taxon>
        <taxon>Bacillati</taxon>
        <taxon>Bacillota</taxon>
        <taxon>Clostridia</taxon>
        <taxon>Eubacteriales</taxon>
        <taxon>Desulfitobacteriaceae</taxon>
        <taxon>Desulfitobacterium</taxon>
    </lineage>
</organism>
<keyword id="KW-1185">Reference proteome</keyword>
<keyword id="KW-0687">Ribonucleoprotein</keyword>
<keyword id="KW-0689">Ribosomal protein</keyword>
<keyword id="KW-0694">RNA-binding</keyword>
<keyword id="KW-0699">rRNA-binding</keyword>
<keyword id="KW-0820">tRNA-binding</keyword>
<feature type="chain" id="PRO_1000014184" description="Small ribosomal subunit protein uS7">
    <location>
        <begin position="1"/>
        <end position="156"/>
    </location>
</feature>
<comment type="function">
    <text evidence="1">One of the primary rRNA binding proteins, it binds directly to 16S rRNA where it nucleates assembly of the head domain of the 30S subunit. Is located at the subunit interface close to the decoding center, probably blocks exit of the E-site tRNA.</text>
</comment>
<comment type="subunit">
    <text evidence="1">Part of the 30S ribosomal subunit. Contacts proteins S9 and S11.</text>
</comment>
<comment type="similarity">
    <text evidence="1">Belongs to the universal ribosomal protein uS7 family.</text>
</comment>